<evidence type="ECO:0000250" key="1">
    <source>
        <dbReference type="UniProtKB" id="B1B5I8"/>
    </source>
</evidence>
<evidence type="ECO:0000255" key="2">
    <source>
        <dbReference type="PROSITE-ProRule" id="PRU00031"/>
    </source>
</evidence>
<evidence type="ECO:0000303" key="3">
    <source>
    </source>
</evidence>
<evidence type="ECO:0000303" key="4">
    <source ref="1"/>
</evidence>
<evidence type="ECO:0000305" key="5"/>
<reference key="1">
    <citation type="journal article" date="1997" name="Fish. Sci.">
        <title>Amino acid sequences of Kunitz-type protease inhibitors from the sea anemone Actinia equina.</title>
        <authorList>
            <person name="Ishida M."/>
            <person name="Minagawa S."/>
            <person name="Miyauchi K."/>
            <person name="Shimakura K."/>
            <person name="Nagashima Y."/>
            <person name="Shiomi K."/>
        </authorList>
    </citation>
    <scope>PROTEIN SEQUENCE</scope>
</reference>
<reference key="2">
    <citation type="journal article" date="2012" name="Toxicon">
        <title>Development of a rational nomenclature for naming peptide and protein toxins from sea anemones.</title>
        <authorList>
            <person name="Oliveira J.S."/>
            <person name="Fuentes-Silva D."/>
            <person name="King G.F."/>
        </authorList>
    </citation>
    <scope>NOMENCLATURE</scope>
</reference>
<dbReference type="SMR" id="P0DMW7"/>
<dbReference type="GO" id="GO:0005615">
    <property type="term" value="C:extracellular space"/>
    <property type="evidence" value="ECO:0007669"/>
    <property type="project" value="TreeGrafter"/>
</dbReference>
<dbReference type="GO" id="GO:0042151">
    <property type="term" value="C:nematocyst"/>
    <property type="evidence" value="ECO:0007669"/>
    <property type="project" value="UniProtKB-SubCell"/>
</dbReference>
<dbReference type="GO" id="GO:0015459">
    <property type="term" value="F:potassium channel regulator activity"/>
    <property type="evidence" value="ECO:0007669"/>
    <property type="project" value="UniProtKB-KW"/>
</dbReference>
<dbReference type="GO" id="GO:0004867">
    <property type="term" value="F:serine-type endopeptidase inhibitor activity"/>
    <property type="evidence" value="ECO:0007669"/>
    <property type="project" value="UniProtKB-KW"/>
</dbReference>
<dbReference type="GO" id="GO:0090729">
    <property type="term" value="F:toxin activity"/>
    <property type="evidence" value="ECO:0007669"/>
    <property type="project" value="UniProtKB-KW"/>
</dbReference>
<dbReference type="CDD" id="cd00109">
    <property type="entry name" value="Kunitz-type"/>
    <property type="match status" value="1"/>
</dbReference>
<dbReference type="FunFam" id="4.10.410.10:FF:000021">
    <property type="entry name" value="Serine protease inhibitor, putative"/>
    <property type="match status" value="1"/>
</dbReference>
<dbReference type="Gene3D" id="4.10.410.10">
    <property type="entry name" value="Pancreatic trypsin inhibitor Kunitz domain"/>
    <property type="match status" value="1"/>
</dbReference>
<dbReference type="InterPro" id="IPR002223">
    <property type="entry name" value="Kunitz_BPTI"/>
</dbReference>
<dbReference type="InterPro" id="IPR036880">
    <property type="entry name" value="Kunitz_BPTI_sf"/>
</dbReference>
<dbReference type="InterPro" id="IPR020901">
    <property type="entry name" value="Prtase_inh_Kunz-CS"/>
</dbReference>
<dbReference type="InterPro" id="IPR050098">
    <property type="entry name" value="TFPI/VKTCI-like"/>
</dbReference>
<dbReference type="PANTHER" id="PTHR10083">
    <property type="entry name" value="KUNITZ-TYPE PROTEASE INHIBITOR-RELATED"/>
    <property type="match status" value="1"/>
</dbReference>
<dbReference type="PANTHER" id="PTHR10083:SF328">
    <property type="entry name" value="TISSUE FACTOR PATHWAY INHIBITOR"/>
    <property type="match status" value="1"/>
</dbReference>
<dbReference type="Pfam" id="PF00014">
    <property type="entry name" value="Kunitz_BPTI"/>
    <property type="match status" value="1"/>
</dbReference>
<dbReference type="PRINTS" id="PR00759">
    <property type="entry name" value="BASICPTASE"/>
</dbReference>
<dbReference type="SMART" id="SM00131">
    <property type="entry name" value="KU"/>
    <property type="match status" value="1"/>
</dbReference>
<dbReference type="SUPFAM" id="SSF57362">
    <property type="entry name" value="BPTI-like"/>
    <property type="match status" value="1"/>
</dbReference>
<dbReference type="PROSITE" id="PS00280">
    <property type="entry name" value="BPTI_KUNITZ_1"/>
    <property type="match status" value="1"/>
</dbReference>
<dbReference type="PROSITE" id="PS50279">
    <property type="entry name" value="BPTI_KUNITZ_2"/>
    <property type="match status" value="1"/>
</dbReference>
<sequence>DASSFCQLPAVVGKCRGYFPRFYYNTEAGKCQQFIYGGCGGNRNNFETVEDCRATCHSH</sequence>
<comment type="function">
    <text evidence="1">Dual-function toxin that inhibits both the serine protease trypsin and voltage-gated potassium channels (Kv).</text>
</comment>
<comment type="subcellular location">
    <subcellularLocation>
        <location evidence="5">Secreted</location>
    </subcellularLocation>
    <subcellularLocation>
        <location evidence="5">Nematocyst</location>
    </subcellularLocation>
</comment>
<comment type="similarity">
    <text evidence="5">Belongs to the venom Kunitz-type family. Sea anemone type 2 potassium channel toxin subfamily.</text>
</comment>
<proteinExistence type="evidence at protein level"/>
<accession>P0DMW7</accession>
<name>VKT3B_ACTEQ</name>
<feature type="chain" id="PRO_0000433571" description="PI-actitoxin-Aeq3b">
    <location>
        <begin position="1"/>
        <end position="59"/>
    </location>
</feature>
<feature type="domain" description="BPTI/Kunitz inhibitor" evidence="2">
    <location>
        <begin position="6"/>
        <end position="56"/>
    </location>
</feature>
<feature type="disulfide bond" evidence="2">
    <location>
        <begin position="6"/>
        <end position="56"/>
    </location>
</feature>
<feature type="disulfide bond" evidence="2">
    <location>
        <begin position="15"/>
        <end position="39"/>
    </location>
</feature>
<feature type="disulfide bond" evidence="2">
    <location>
        <begin position="31"/>
        <end position="52"/>
    </location>
</feature>
<keyword id="KW-0903">Direct protein sequencing</keyword>
<keyword id="KW-1015">Disulfide bond</keyword>
<keyword id="KW-0872">Ion channel impairing toxin</keyword>
<keyword id="KW-0166">Nematocyst</keyword>
<keyword id="KW-0632">Potassium channel impairing toxin</keyword>
<keyword id="KW-0646">Protease inhibitor</keyword>
<keyword id="KW-0964">Secreted</keyword>
<keyword id="KW-0722">Serine protease inhibitor</keyword>
<keyword id="KW-0800">Toxin</keyword>
<organism>
    <name type="scientific">Actinia equina</name>
    <name type="common">Beadlet anemone</name>
    <dbReference type="NCBI Taxonomy" id="6106"/>
    <lineage>
        <taxon>Eukaryota</taxon>
        <taxon>Metazoa</taxon>
        <taxon>Cnidaria</taxon>
        <taxon>Anthozoa</taxon>
        <taxon>Hexacorallia</taxon>
        <taxon>Actiniaria</taxon>
        <taxon>Actiniidae</taxon>
        <taxon>Actinia</taxon>
    </lineage>
</organism>
<protein>
    <recommendedName>
        <fullName evidence="3">PI-actitoxin-Aeq3b</fullName>
        <shortName evidence="3">PI-AITX-Aeq3b</shortName>
    </recommendedName>
    <alternativeName>
        <fullName evidence="4">Kunitz-type proteinase inhibitor AEPI-II</fullName>
    </alternativeName>
</protein>